<protein>
    <recommendedName>
        <fullName>Fucose mutarotase</fullName>
        <ecNumber>5.1.3.29</ecNumber>
    </recommendedName>
</protein>
<feature type="chain" id="PRO_0000286555" description="Fucose mutarotase">
    <location>
        <begin position="1"/>
        <end position="153"/>
    </location>
</feature>
<feature type="active site" description="Proton donor" evidence="1">
    <location>
        <position position="24"/>
    </location>
</feature>
<feature type="active site" evidence="1">
    <location>
        <position position="69"/>
    </location>
</feature>
<feature type="active site" evidence="1">
    <location>
        <position position="119"/>
    </location>
</feature>
<feature type="binding site" evidence="1">
    <location>
        <position position="32"/>
    </location>
    <ligand>
        <name>substrate</name>
    </ligand>
</feature>
<feature type="binding site" evidence="1">
    <location>
        <position position="78"/>
    </location>
    <ligand>
        <name>substrate</name>
    </ligand>
</feature>
<feature type="binding site" evidence="1">
    <location>
        <position position="119"/>
    </location>
    <ligand>
        <name>substrate</name>
    </ligand>
</feature>
<feature type="binding site" evidence="1">
    <location>
        <position position="137"/>
    </location>
    <ligand>
        <name>substrate</name>
    </ligand>
</feature>
<feature type="binding site" evidence="1">
    <location>
        <position position="139"/>
    </location>
    <ligand>
        <name>substrate</name>
    </ligand>
</feature>
<keyword id="KW-0413">Isomerase</keyword>
<keyword id="KW-1185">Reference proteome</keyword>
<dbReference type="EC" id="5.1.3.29"/>
<dbReference type="EMBL" id="AL831745">
    <property type="protein sequence ID" value="CAD60840.1"/>
    <property type="molecule type" value="Genomic_DNA"/>
</dbReference>
<dbReference type="EMBL" id="BC081387">
    <property type="protein sequence ID" value="AAH81387.1"/>
    <property type="molecule type" value="mRNA"/>
</dbReference>
<dbReference type="RefSeq" id="NP_001004530.1">
    <property type="nucleotide sequence ID" value="NM_001004530.1"/>
</dbReference>
<dbReference type="RefSeq" id="XP_005156875.1">
    <property type="nucleotide sequence ID" value="XM_005156818.3"/>
</dbReference>
<dbReference type="RefSeq" id="XP_017214222.1">
    <property type="nucleotide sequence ID" value="XM_017358733.1"/>
</dbReference>
<dbReference type="SMR" id="Q7ZZ03"/>
<dbReference type="STRING" id="7955.ENSDARP00000057598"/>
<dbReference type="PaxDb" id="7955-ENSDARP00000057598"/>
<dbReference type="Ensembl" id="ENSDART00000057599">
    <property type="protein sequence ID" value="ENSDARP00000057598"/>
    <property type="gene ID" value="ENSDARG00000039422"/>
</dbReference>
<dbReference type="GeneID" id="447896"/>
<dbReference type="KEGG" id="dre:447896"/>
<dbReference type="AGR" id="ZFIN:ZDB-GENE-030616-618"/>
<dbReference type="CTD" id="282969"/>
<dbReference type="ZFIN" id="ZDB-GENE-030616-618">
    <property type="gene designation" value="fuom"/>
</dbReference>
<dbReference type="eggNOG" id="ENOG502RZR7">
    <property type="taxonomic scope" value="Eukaryota"/>
</dbReference>
<dbReference type="HOGENOM" id="CLU_120075_1_0_1"/>
<dbReference type="InParanoid" id="Q7ZZ03"/>
<dbReference type="OMA" id="PVWDTYT"/>
<dbReference type="OrthoDB" id="10011710at2759"/>
<dbReference type="PhylomeDB" id="Q7ZZ03"/>
<dbReference type="TreeFam" id="TF324689"/>
<dbReference type="Reactome" id="R-DRE-6787639">
    <property type="pathway name" value="GDP-fucose biosynthesis"/>
</dbReference>
<dbReference type="PRO" id="PR:Q7ZZ03"/>
<dbReference type="Proteomes" id="UP000000437">
    <property type="component" value="Chromosome 13"/>
</dbReference>
<dbReference type="Bgee" id="ENSDARG00000039422">
    <property type="expression patterns" value="Expressed in liver and 25 other cell types or tissues"/>
</dbReference>
<dbReference type="GO" id="GO:0042806">
    <property type="term" value="F:fucose binding"/>
    <property type="evidence" value="ECO:0000250"/>
    <property type="project" value="UniProtKB"/>
</dbReference>
<dbReference type="GO" id="GO:0036373">
    <property type="term" value="F:L-fucose mutarotase activity"/>
    <property type="evidence" value="ECO:0007669"/>
    <property type="project" value="UniProtKB-EC"/>
</dbReference>
<dbReference type="GO" id="GO:0016857">
    <property type="term" value="F:racemase and epimerase activity, acting on carbohydrates and derivatives"/>
    <property type="evidence" value="ECO:0000250"/>
    <property type="project" value="UniProtKB"/>
</dbReference>
<dbReference type="GO" id="GO:0006004">
    <property type="term" value="P:fucose metabolic process"/>
    <property type="evidence" value="ECO:0000250"/>
    <property type="project" value="UniProtKB"/>
</dbReference>
<dbReference type="GO" id="GO:0036065">
    <property type="term" value="P:fucosylation"/>
    <property type="evidence" value="ECO:0000318"/>
    <property type="project" value="GO_Central"/>
</dbReference>
<dbReference type="FunFam" id="3.40.1650.10:FF:000005">
    <property type="entry name" value="Fucose mutarotase"/>
    <property type="match status" value="1"/>
</dbReference>
<dbReference type="Gene3D" id="3.40.1650.10">
    <property type="entry name" value="RbsD-like domain"/>
    <property type="match status" value="1"/>
</dbReference>
<dbReference type="InterPro" id="IPR023750">
    <property type="entry name" value="RbsD-like_sf"/>
</dbReference>
<dbReference type="InterPro" id="IPR050443">
    <property type="entry name" value="RbsD/FucU_mutarotase"/>
</dbReference>
<dbReference type="InterPro" id="IPR007721">
    <property type="entry name" value="RbsD_FucU"/>
</dbReference>
<dbReference type="PANTHER" id="PTHR31690">
    <property type="entry name" value="FUCOSE MUTAROTASE"/>
    <property type="match status" value="1"/>
</dbReference>
<dbReference type="PANTHER" id="PTHR31690:SF4">
    <property type="entry name" value="FUCOSE MUTAROTASE"/>
    <property type="match status" value="1"/>
</dbReference>
<dbReference type="Pfam" id="PF05025">
    <property type="entry name" value="RbsD_FucU"/>
    <property type="match status" value="1"/>
</dbReference>
<dbReference type="SUPFAM" id="SSF102546">
    <property type="entry name" value="RbsD-like"/>
    <property type="match status" value="1"/>
</dbReference>
<reference key="1">
    <citation type="journal article" date="2013" name="Nature">
        <title>The zebrafish reference genome sequence and its relationship to the human genome.</title>
        <authorList>
            <person name="Howe K."/>
            <person name="Clark M.D."/>
            <person name="Torroja C.F."/>
            <person name="Torrance J."/>
            <person name="Berthelot C."/>
            <person name="Muffato M."/>
            <person name="Collins J.E."/>
            <person name="Humphray S."/>
            <person name="McLaren K."/>
            <person name="Matthews L."/>
            <person name="McLaren S."/>
            <person name="Sealy I."/>
            <person name="Caccamo M."/>
            <person name="Churcher C."/>
            <person name="Scott C."/>
            <person name="Barrett J.C."/>
            <person name="Koch R."/>
            <person name="Rauch G.J."/>
            <person name="White S."/>
            <person name="Chow W."/>
            <person name="Kilian B."/>
            <person name="Quintais L.T."/>
            <person name="Guerra-Assuncao J.A."/>
            <person name="Zhou Y."/>
            <person name="Gu Y."/>
            <person name="Yen J."/>
            <person name="Vogel J.H."/>
            <person name="Eyre T."/>
            <person name="Redmond S."/>
            <person name="Banerjee R."/>
            <person name="Chi J."/>
            <person name="Fu B."/>
            <person name="Langley E."/>
            <person name="Maguire S.F."/>
            <person name="Laird G.K."/>
            <person name="Lloyd D."/>
            <person name="Kenyon E."/>
            <person name="Donaldson S."/>
            <person name="Sehra H."/>
            <person name="Almeida-King J."/>
            <person name="Loveland J."/>
            <person name="Trevanion S."/>
            <person name="Jones M."/>
            <person name="Quail M."/>
            <person name="Willey D."/>
            <person name="Hunt A."/>
            <person name="Burton J."/>
            <person name="Sims S."/>
            <person name="McLay K."/>
            <person name="Plumb B."/>
            <person name="Davis J."/>
            <person name="Clee C."/>
            <person name="Oliver K."/>
            <person name="Clark R."/>
            <person name="Riddle C."/>
            <person name="Elliot D."/>
            <person name="Threadgold G."/>
            <person name="Harden G."/>
            <person name="Ware D."/>
            <person name="Begum S."/>
            <person name="Mortimore B."/>
            <person name="Kerry G."/>
            <person name="Heath P."/>
            <person name="Phillimore B."/>
            <person name="Tracey A."/>
            <person name="Corby N."/>
            <person name="Dunn M."/>
            <person name="Johnson C."/>
            <person name="Wood J."/>
            <person name="Clark S."/>
            <person name="Pelan S."/>
            <person name="Griffiths G."/>
            <person name="Smith M."/>
            <person name="Glithero R."/>
            <person name="Howden P."/>
            <person name="Barker N."/>
            <person name="Lloyd C."/>
            <person name="Stevens C."/>
            <person name="Harley J."/>
            <person name="Holt K."/>
            <person name="Panagiotidis G."/>
            <person name="Lovell J."/>
            <person name="Beasley H."/>
            <person name="Henderson C."/>
            <person name="Gordon D."/>
            <person name="Auger K."/>
            <person name="Wright D."/>
            <person name="Collins J."/>
            <person name="Raisen C."/>
            <person name="Dyer L."/>
            <person name="Leung K."/>
            <person name="Robertson L."/>
            <person name="Ambridge K."/>
            <person name="Leongamornlert D."/>
            <person name="McGuire S."/>
            <person name="Gilderthorp R."/>
            <person name="Griffiths C."/>
            <person name="Manthravadi D."/>
            <person name="Nichol S."/>
            <person name="Barker G."/>
            <person name="Whitehead S."/>
            <person name="Kay M."/>
            <person name="Brown J."/>
            <person name="Murnane C."/>
            <person name="Gray E."/>
            <person name="Humphries M."/>
            <person name="Sycamore N."/>
            <person name="Barker D."/>
            <person name="Saunders D."/>
            <person name="Wallis J."/>
            <person name="Babbage A."/>
            <person name="Hammond S."/>
            <person name="Mashreghi-Mohammadi M."/>
            <person name="Barr L."/>
            <person name="Martin S."/>
            <person name="Wray P."/>
            <person name="Ellington A."/>
            <person name="Matthews N."/>
            <person name="Ellwood M."/>
            <person name="Woodmansey R."/>
            <person name="Clark G."/>
            <person name="Cooper J."/>
            <person name="Tromans A."/>
            <person name="Grafham D."/>
            <person name="Skuce C."/>
            <person name="Pandian R."/>
            <person name="Andrews R."/>
            <person name="Harrison E."/>
            <person name="Kimberley A."/>
            <person name="Garnett J."/>
            <person name="Fosker N."/>
            <person name="Hall R."/>
            <person name="Garner P."/>
            <person name="Kelly D."/>
            <person name="Bird C."/>
            <person name="Palmer S."/>
            <person name="Gehring I."/>
            <person name="Berger A."/>
            <person name="Dooley C.M."/>
            <person name="Ersan-Urun Z."/>
            <person name="Eser C."/>
            <person name="Geiger H."/>
            <person name="Geisler M."/>
            <person name="Karotki L."/>
            <person name="Kirn A."/>
            <person name="Konantz J."/>
            <person name="Konantz M."/>
            <person name="Oberlander M."/>
            <person name="Rudolph-Geiger S."/>
            <person name="Teucke M."/>
            <person name="Lanz C."/>
            <person name="Raddatz G."/>
            <person name="Osoegawa K."/>
            <person name="Zhu B."/>
            <person name="Rapp A."/>
            <person name="Widaa S."/>
            <person name="Langford C."/>
            <person name="Yang F."/>
            <person name="Schuster S.C."/>
            <person name="Carter N.P."/>
            <person name="Harrow J."/>
            <person name="Ning Z."/>
            <person name="Herrero J."/>
            <person name="Searle S.M."/>
            <person name="Enright A."/>
            <person name="Geisler R."/>
            <person name="Plasterk R.H."/>
            <person name="Lee C."/>
            <person name="Westerfield M."/>
            <person name="de Jong P.J."/>
            <person name="Zon L.I."/>
            <person name="Postlethwait J.H."/>
            <person name="Nusslein-Volhard C."/>
            <person name="Hubbard T.J."/>
            <person name="Roest Crollius H."/>
            <person name="Rogers J."/>
            <person name="Stemple D.L."/>
        </authorList>
    </citation>
    <scope>NUCLEOTIDE SEQUENCE [LARGE SCALE GENOMIC DNA]</scope>
    <source>
        <strain>Tuebingen</strain>
    </source>
</reference>
<reference key="2">
    <citation type="submission" date="2004-09" db="EMBL/GenBank/DDBJ databases">
        <authorList>
            <consortium name="NIH - Zebrafish Gene Collection (ZGC) project"/>
        </authorList>
    </citation>
    <scope>NUCLEOTIDE SEQUENCE [LARGE SCALE MRNA]</scope>
    <source>
        <tissue>Olfactory epithelium</tissue>
    </source>
</reference>
<gene>
    <name type="primary">fuom</name>
    <name type="ORF">si:ch211-217g15.2</name>
    <name type="ORF">zgc:101698</name>
</gene>
<comment type="function">
    <text evidence="1">Involved in the interconversion between alpha- and beta-L-fucoses.</text>
</comment>
<comment type="catalytic activity">
    <reaction>
        <text>alpha-L-fucose = beta-L-fucose</text>
        <dbReference type="Rhea" id="RHEA:25580"/>
        <dbReference type="ChEBI" id="CHEBI:42548"/>
        <dbReference type="ChEBI" id="CHEBI:42589"/>
        <dbReference type="EC" id="5.1.3.29"/>
    </reaction>
</comment>
<comment type="similarity">
    <text evidence="2">Belongs to the RbsD / FucU family.</text>
</comment>
<proteinExistence type="evidence at transcript level"/>
<accession>Q7ZZ03</accession>
<organism>
    <name type="scientific">Danio rerio</name>
    <name type="common">Zebrafish</name>
    <name type="synonym">Brachydanio rerio</name>
    <dbReference type="NCBI Taxonomy" id="7955"/>
    <lineage>
        <taxon>Eukaryota</taxon>
        <taxon>Metazoa</taxon>
        <taxon>Chordata</taxon>
        <taxon>Craniata</taxon>
        <taxon>Vertebrata</taxon>
        <taxon>Euteleostomi</taxon>
        <taxon>Actinopterygii</taxon>
        <taxon>Neopterygii</taxon>
        <taxon>Teleostei</taxon>
        <taxon>Ostariophysi</taxon>
        <taxon>Cypriniformes</taxon>
        <taxon>Danionidae</taxon>
        <taxon>Danioninae</taxon>
        <taxon>Danio</taxon>
    </lineage>
</organism>
<evidence type="ECO:0000250" key="1"/>
<evidence type="ECO:0000305" key="2"/>
<sequence length="153" mass="16677">MVILKGIPSVLTPELLYVLAQMGHGDELVLADANFPTSSVCKCGPVEIRADGVRIPELLKAILKLFPLDTYDESAAVMDLVPSDLLKGLKVPIWDQYSELLKQAGSDGNMKPVERFAFYERAKKAFAVVATGETALYGNLIIKKGVIPPEEQC</sequence>
<name>FUCM_DANRE</name>